<proteinExistence type="evidence at protein level"/>
<keyword id="KW-0130">Cell adhesion</keyword>
<keyword id="KW-1003">Cell membrane</keyword>
<keyword id="KW-0903">Direct protein sequencing</keyword>
<keyword id="KW-1015">Disulfide bond</keyword>
<keyword id="KW-0325">Glycoprotein</keyword>
<keyword id="KW-0430">Lectin</keyword>
<keyword id="KW-0472">Membrane</keyword>
<keyword id="KW-1185">Reference proteome</keyword>
<keyword id="KW-0732">Signal</keyword>
<keyword id="KW-0812">Transmembrane</keyword>
<keyword id="KW-1133">Transmembrane helix</keyword>
<protein>
    <recommendedName>
        <fullName evidence="8">Galactose/N-acetyl-D-galactosamine lectin heavy subunit 2</fullName>
        <shortName evidence="6">Gal/GalNAc lectin heavy subunit 2</shortName>
    </recommendedName>
    <alternativeName>
        <fullName evidence="5">170 kDa surface lectin</fullName>
    </alternativeName>
    <alternativeName>
        <fullName evidence="6">Galactose and N-acetyl-D-galactosamine-inhibitable adherence lectin</fullName>
    </alternativeName>
</protein>
<comment type="function">
    <text evidence="4 9">Lectin which binds galactose and N-acetyl-D-galactosamine of host glycoproteins and thus mediates adhesion to host cells (Probable) (PubMed:2536731). Mediates adherence to host colonic mucins, an essential step for pathogenic tissue invasion (Probable).</text>
</comment>
<comment type="subunit">
    <text evidence="4">Heterodimer composed of a 170 kDa heavy subunit (hgl) and a 31/35 kDa light subunit (lgl); disulfide-linked.</text>
</comment>
<comment type="subcellular location">
    <subcellularLocation>
        <location evidence="4">Cell membrane</location>
        <topology evidence="10">Single-pass type I membrane protein</topology>
    </subcellularLocation>
</comment>
<comment type="developmental stage">
    <text evidence="4">Expressed in trophozoites (at protein level).</text>
</comment>
<comment type="PTM">
    <text evidence="4">N-glycosylated.</text>
</comment>
<organism evidence="13">
    <name type="scientific">Entamoeba histolytica (strain ATCC 30459 / HM-1:IMSS / ABRM)</name>
    <dbReference type="NCBI Taxonomy" id="294381"/>
    <lineage>
        <taxon>Eukaryota</taxon>
        <taxon>Amoebozoa</taxon>
        <taxon>Evosea</taxon>
        <taxon>Archamoebae</taxon>
        <taxon>Mastigamoebida</taxon>
        <taxon>Entamoebidae</taxon>
        <taxon>Entamoeba</taxon>
    </lineage>
</organism>
<feature type="signal peptide" evidence="3 4">
    <location>
        <begin position="1"/>
        <end position="15"/>
    </location>
</feature>
<feature type="chain" id="PRO_0000022350" description="Galactose/N-acetyl-D-galactosamine lectin heavy subunit 2">
    <location>
        <begin position="16"/>
        <end position="1286"/>
    </location>
</feature>
<feature type="topological domain" description="Extracellular" evidence="8">
    <location>
        <begin position="16"/>
        <end position="1227"/>
    </location>
</feature>
<feature type="transmembrane region" description="Helical" evidence="1">
    <location>
        <begin position="1228"/>
        <end position="1248"/>
    </location>
</feature>
<feature type="topological domain" description="Cytoplasmic" evidence="8">
    <location>
        <begin position="1249"/>
        <end position="1286"/>
    </location>
</feature>
<feature type="glycosylation site" description="N-linked (GlcNAc...) asparagine" evidence="2">
    <location>
        <position position="200"/>
    </location>
</feature>
<feature type="glycosylation site" description="N-linked (GlcNAc...) asparagine" evidence="2">
    <location>
        <position position="331"/>
    </location>
</feature>
<feature type="glycosylation site" description="N-linked (GlcNAc...) asparagine" evidence="2">
    <location>
        <position position="384"/>
    </location>
</feature>
<feature type="glycosylation site" description="N-linked (GlcNAc...) asparagine" evidence="2">
    <location>
        <position position="462"/>
    </location>
</feature>
<feature type="glycosylation site" description="N-linked (GlcNAc...) asparagine" evidence="2">
    <location>
        <position position="652"/>
    </location>
</feature>
<feature type="glycosylation site" description="N-linked (GlcNAc...) asparagine" evidence="2">
    <location>
        <position position="883"/>
    </location>
</feature>
<feature type="glycosylation site" description="N-linked (GlcNAc...) asparagine" evidence="2">
    <location>
        <position position="1197"/>
    </location>
</feature>
<feature type="glycosylation site" description="N-linked (GlcNAc...) asparagine" evidence="2">
    <location>
        <position position="1207"/>
    </location>
</feature>
<feature type="sequence conflict" description="In Ref. 4; AA sequence." evidence="8" ref="4">
    <original>D</original>
    <variation>G</variation>
    <location>
        <position position="16"/>
    </location>
</feature>
<feature type="sequence conflict" description="In Ref. 3; AAA29106." evidence="8" ref="3">
    <original>KLSVLSQLTTVDGVTIYYLKG</original>
    <variation>NLSLLSQLKQSRVTLYYLKD</variation>
    <location>
        <begin position="236"/>
        <end position="256"/>
    </location>
</feature>
<feature type="sequence conflict" description="In Ref. 3; AAA29106." evidence="8" ref="3">
    <original>I</original>
    <variation>Q</variation>
    <location>
        <position position="290"/>
    </location>
</feature>
<feature type="sequence conflict" description="In Ref. 3; AAA29106." evidence="8" ref="3">
    <original>C</original>
    <variation>S</variation>
    <location>
        <position position="813"/>
    </location>
</feature>
<feature type="sequence conflict" description="In Ref. 3; AAA29106." evidence="8" ref="3">
    <original>TG</original>
    <variation>GT</variation>
    <location>
        <begin position="986"/>
        <end position="987"/>
    </location>
</feature>
<evidence type="ECO:0000255" key="1"/>
<evidence type="ECO:0000255" key="2">
    <source>
        <dbReference type="PROSITE-ProRule" id="PRU00498"/>
    </source>
</evidence>
<evidence type="ECO:0000269" key="3">
    <source>
    </source>
</evidence>
<evidence type="ECO:0000269" key="4">
    <source>
    </source>
</evidence>
<evidence type="ECO:0000303" key="5">
    <source>
    </source>
</evidence>
<evidence type="ECO:0000303" key="6">
    <source>
    </source>
</evidence>
<evidence type="ECO:0000303" key="7">
    <source>
    </source>
</evidence>
<evidence type="ECO:0000305" key="8"/>
<evidence type="ECO:0000305" key="9">
    <source>
    </source>
</evidence>
<evidence type="ECO:0000305" key="10">
    <source>
    </source>
</evidence>
<evidence type="ECO:0000312" key="11">
    <source>
        <dbReference type="EMBL" id="AAA29106.1"/>
    </source>
</evidence>
<evidence type="ECO:0000312" key="12">
    <source>
        <dbReference type="EMBL" id="CAA43321.1"/>
    </source>
</evidence>
<evidence type="ECO:0000312" key="13">
    <source>
        <dbReference type="EMBL" id="EAL50797.1"/>
    </source>
</evidence>
<gene>
    <name evidence="7" type="primary">hgl2</name>
    <name evidence="11" type="synonym">CEL-170/4</name>
    <name evidence="13" type="ORF">EHI_012270</name>
</gene>
<accession>P23502</accession>
<accession>A0A175JEM6</accession>
<accession>C4LTM0</accession>
<name>HGL2_ENTH1</name>
<dbReference type="EMBL" id="DS571148">
    <property type="protein sequence ID" value="EAL50797.1"/>
    <property type="molecule type" value="Genomic_DNA"/>
</dbReference>
<dbReference type="EMBL" id="X61003">
    <property type="protein sequence ID" value="CAA43321.1"/>
    <property type="molecule type" value="Genomic_DNA"/>
</dbReference>
<dbReference type="EMBL" id="M60498">
    <property type="protein sequence ID" value="AAA29106.1"/>
    <property type="molecule type" value="Genomic_DNA"/>
</dbReference>
<dbReference type="PIR" id="A39117">
    <property type="entry name" value="A39117"/>
</dbReference>
<dbReference type="RefSeq" id="XP_656181.1">
    <property type="nucleotide sequence ID" value="XM_651089.1"/>
</dbReference>
<dbReference type="STRING" id="5759.C4LTM0"/>
<dbReference type="GlyCosmos" id="P23502">
    <property type="glycosylation" value="9 sites, No reported glycans"/>
</dbReference>
<dbReference type="EnsemblProtists" id="GAT91913">
    <property type="protein sequence ID" value="GAT91913"/>
    <property type="gene ID" value="CL6EHI_012270"/>
</dbReference>
<dbReference type="EnsemblProtists" id="rna_EHI_012270-1">
    <property type="protein sequence ID" value="rna_EHI_012270-1"/>
    <property type="gene ID" value="EHI_012270"/>
</dbReference>
<dbReference type="GeneID" id="3410497"/>
<dbReference type="KEGG" id="ehi:EHI_012270"/>
<dbReference type="VEuPathDB" id="AmoebaDB:EHI5A_097310"/>
<dbReference type="VEuPathDB" id="AmoebaDB:EHI5A_206100"/>
<dbReference type="VEuPathDB" id="AmoebaDB:EHI5A_223980"/>
<dbReference type="VEuPathDB" id="AmoebaDB:EHI7A_034930"/>
<dbReference type="VEuPathDB" id="AmoebaDB:EHI8A_064380"/>
<dbReference type="VEuPathDB" id="AmoebaDB:EHI_012270"/>
<dbReference type="VEuPathDB" id="AmoebaDB:KM1_075340"/>
<dbReference type="VEuPathDB" id="AmoebaDB:KM1_116600"/>
<dbReference type="VEuPathDB" id="AmoebaDB:KM1_116910"/>
<dbReference type="VEuPathDB" id="AmoebaDB:KM1_117020"/>
<dbReference type="VEuPathDB" id="AmoebaDB:KM1_117130"/>
<dbReference type="VEuPathDB" id="AmoebaDB:KM1_117340"/>
<dbReference type="eggNOG" id="KOG1225">
    <property type="taxonomic scope" value="Eukaryota"/>
</dbReference>
<dbReference type="HOGENOM" id="CLU_262082_0_0_1"/>
<dbReference type="OMA" id="NTCEDAY"/>
<dbReference type="OrthoDB" id="28608at2759"/>
<dbReference type="Proteomes" id="UP000001926">
    <property type="component" value="Partially assembled WGS sequence"/>
</dbReference>
<dbReference type="GO" id="GO:0005886">
    <property type="term" value="C:plasma membrane"/>
    <property type="evidence" value="ECO:0007669"/>
    <property type="project" value="UniProtKB-SubCell"/>
</dbReference>
<dbReference type="GO" id="GO:0030246">
    <property type="term" value="F:carbohydrate binding"/>
    <property type="evidence" value="ECO:0007669"/>
    <property type="project" value="UniProtKB-KW"/>
</dbReference>
<dbReference type="GO" id="GO:0007155">
    <property type="term" value="P:cell adhesion"/>
    <property type="evidence" value="ECO:0007669"/>
    <property type="project" value="UniProtKB-KW"/>
</dbReference>
<sequence length="1286" mass="144328">MKLLLLNILLLCCLADKLNEFSADIDYYDLGIMSRGKNAGSWYHSYTHQYDVFYYLAMQPWRHFVWTTCETTKGNKECYKYIINEDHNLNAQQLNNIKNLDKQDFCQKEYAYPIEKYEVDWDNVPVDEQQIESVDINGKTCFKYAAKRPLAYVYLNTKMTYATKTEAYDVCRMDFIGGRSITFRSFNNENKDFIDQYNTNTTSKCIIDVHKNNVNTHLAIILGITDSTVIKSLQEKLSVLSQLTTVDGVTIYYLKGDSYATDNIKLKDLKYETLVKYTAGQGQVDPLVNIAKNDLFKMISDKKIKRGTMVVLMDNALGSEFNAETEFDRKNISVHTVVLNRNKDSKITYSALKLVSLGPHYHEFTSNSEVSTTIDELFKGIRANLTERCDRDKCSGFCDAMNRCTCPMCCENDCFYTSCDVETGSCIPWPKAKPKAKKECPATCVGLYECKDLEGCVVTKYNASCEPKVKCMVPYCDDDNNLKEVCKQKANCEADQKPSSDGYCWSYTCDETTGFCKKYKHGNLCTGKTTNCQEYVCDSEQRCTVQEKVCVKTSPYIEMSCYVAKCNLNTGMCENRLSCDTYSSCGGDSTGSVCKCDASTGNQCKCNKVENGNYCDSSKHEICDYTGDKPKCIVSECTEDLVRDGCLIKRCNKTSKTTYWENVDCSNTKIEFAQDGKSETMCKPYYSATCLNGQCVVQAVGDVSNVGCGYCSMGTDNVITYHDDCDSRKSQCGNFNGKCQPNGDNSYSCVFEKDKTSSKSDNDICAECSSLTCPADTTYRTYTYDSKTGTCKATVKPTPSCSVCEKGKFVEKCKDQKLERKVTLEDGKEYQYNIPKDCVNEQCIPRTYVDCLANDDNFGEIYKFYLPCQAYVTATYHYSSLFNLTSYKLHLPQSEEFMKEADKEAYCTYEITTRECKTCSLTETKEKVEEIDLCAEETKNGGVPFKCKNNNCIIDPNFDCQPIECKIQEIVITEKDGIKTTTCKDTGKTTCDTNNKRIEDARKAFIEGKEGIEQVECASTVCQNDNSCPIIADVEKCNQNTEVDYGCKAMTGECDGTTYLCKFVQLTDDPSLDSEHFRTKSGVELNNACLKYKCVESKGSDGKITHKWEIDTERSNIDPKPRNPCETATCDQTTGETIYTKKTCTVSEEFPTITPNQGRCFYCQCSYLDGSSVLTMYGETDKEYYDLDACGNCRVWNQTDRTQQLNNHTECILAGEINNVGAIAAATTVAVVVVAVVVALIVVSIGLFKTYQLVSSAMKNAITTTNENAEYVGADNEATNAATYNG</sequence>
<reference evidence="13" key="1">
    <citation type="journal article" date="2005" name="Nature">
        <title>The genome of the protist parasite Entamoeba histolytica.</title>
        <authorList>
            <person name="Loftus B.J."/>
            <person name="Anderson I."/>
            <person name="Davies R."/>
            <person name="Alsmark U.C."/>
            <person name="Samuelson J."/>
            <person name="Amedeo P."/>
            <person name="Roncaglia P."/>
            <person name="Berriman M."/>
            <person name="Hirt R.P."/>
            <person name="Mann B.J."/>
            <person name="Nozaki T."/>
            <person name="Suh B."/>
            <person name="Pop M."/>
            <person name="Duchene M."/>
            <person name="Ackers J."/>
            <person name="Tannich E."/>
            <person name="Leippe M."/>
            <person name="Hofer M."/>
            <person name="Bruchhaus I."/>
            <person name="Willhoeft U."/>
            <person name="Bhattacharya A."/>
            <person name="Chillingworth T."/>
            <person name="Churcher C.M."/>
            <person name="Hance Z."/>
            <person name="Harris B."/>
            <person name="Harris D."/>
            <person name="Jagels K."/>
            <person name="Moule S."/>
            <person name="Mungall K.L."/>
            <person name="Ormond D."/>
            <person name="Squares R."/>
            <person name="Whitehead S."/>
            <person name="Quail M.A."/>
            <person name="Rabbinowitsch E."/>
            <person name="Norbertczak H."/>
            <person name="Price C."/>
            <person name="Wang Z."/>
            <person name="Guillen N."/>
            <person name="Gilchrist C."/>
            <person name="Stroup S.E."/>
            <person name="Bhattacharya S."/>
            <person name="Lohia A."/>
            <person name="Foster P.G."/>
            <person name="Sicheritz-Ponten T."/>
            <person name="Weber C."/>
            <person name="Singh U."/>
            <person name="Mukherjee C."/>
            <person name="El-Sayed N.M.A."/>
            <person name="Petri W.A."/>
            <person name="Clark C.G."/>
            <person name="Embley T.M."/>
            <person name="Barrell B.G."/>
            <person name="Fraser C.M."/>
            <person name="Hall N."/>
        </authorList>
    </citation>
    <scope>NUCLEOTIDE SEQUENCE [LARGE SCALE GENOMIC DNA]</scope>
    <source>
        <strain evidence="13">ATCC 30459 / HM-1:IMSS / ABRM</strain>
    </source>
</reference>
<reference evidence="12" key="2">
    <citation type="submission" date="1991-08" db="EMBL/GenBank/DDBJ databases">
        <authorList>
            <person name="Tannich E."/>
            <person name="Nickel R."/>
            <person name="Ebert F."/>
            <person name="Horstmann R.D."/>
        </authorList>
    </citation>
    <scope>NUCLEOTIDE SEQUENCE [GENOMIC DNA] OF 1-61</scope>
</reference>
<reference evidence="11" key="3">
    <citation type="journal article" date="1991" name="Proc. Natl. Acad. Sci. U.S.A.">
        <title>Primary structure of the 170-kDa surface lectin of pathogenic Entamoeba histolytica.</title>
        <authorList>
            <person name="Tannich E."/>
            <person name="Ebert F."/>
            <person name="Horstmann R.D."/>
        </authorList>
    </citation>
    <scope>NUCLEOTIDE SEQUENCE [GENOMIC DNA] OF 6-1285</scope>
    <scope>PROTEIN SEQUENCE OF 16-33</scope>
</reference>
<reference key="4">
    <citation type="journal article" date="1989" name="J. Biol. Chem.">
        <title>Subunit structure of the galactose and N-acetyl-D-galactosamine-inhibitable adherence lectin of Entamoeba histolytica.</title>
        <authorList>
            <person name="Petri W.A. Jr."/>
            <person name="Chapman M.D."/>
            <person name="Snodgrass T."/>
            <person name="Mann B.J."/>
            <person name="Broman J."/>
            <person name="Ravdin J.I."/>
        </authorList>
    </citation>
    <scope>PROTEIN SEQUENCE OF 16-30</scope>
    <scope>FUNCTION</scope>
    <scope>INTERACTION WITH LGL</scope>
    <scope>SUBCELLULAR LOCATION</scope>
    <scope>DEVELOPMENTAL STAGE</scope>
    <scope>GLYCOSYLATION</scope>
</reference>
<reference key="5">
    <citation type="journal article" date="1996" name="Mol. Microbiol.">
        <title>Physical mapping and expression of gene families encoding the N-acetyl D-galactosamine adherence lectin of Entamoeba histolytica.</title>
        <authorList>
            <person name="Ramakrishnan G."/>
            <person name="Ragland B.D."/>
            <person name="Purdy J.E."/>
            <person name="Mann B.J."/>
        </authorList>
    </citation>
    <scope>NOMENCLATURE</scope>
    <scope>DEVELOPMENTAL STAGE</scope>
</reference>
<reference key="6">
    <citation type="journal article" date="2002" name="Annu. Rev. Microbiol.">
        <title>The bittersweet interface of parasite and host: lectin-carbohydrate interactions during human invasion by the parasite Entamoeba histolytica.</title>
        <authorList>
            <person name="Petri W.A. Jr."/>
            <person name="Haque R."/>
            <person name="Mann B.J."/>
        </authorList>
    </citation>
    <scope>REVIEW</scope>
</reference>